<gene>
    <name type="ordered locus">AF_0084</name>
</gene>
<protein>
    <recommendedName>
        <fullName>Uncharacterized protein AF_0084</fullName>
    </recommendedName>
</protein>
<sequence>MWRWSSPPSRQKLSRDTSSNKEFSIKFYSVPQSKNLFILPYTTLYMQRYIYPVDLTEVEDELNIIVEKLKTSKAEAIREAIRHYAEELRGLEVVELRDVPKEQAKEEVKEFIKGKERVWADEIADALRLDLSLVNDILMELWSEGYVEPED</sequence>
<accession>O30152</accession>
<keyword id="KW-1185">Reference proteome</keyword>
<organism>
    <name type="scientific">Archaeoglobus fulgidus (strain ATCC 49558 / DSM 4304 / JCM 9628 / NBRC 100126 / VC-16)</name>
    <dbReference type="NCBI Taxonomy" id="224325"/>
    <lineage>
        <taxon>Archaea</taxon>
        <taxon>Methanobacteriati</taxon>
        <taxon>Methanobacteriota</taxon>
        <taxon>Archaeoglobi</taxon>
        <taxon>Archaeoglobales</taxon>
        <taxon>Archaeoglobaceae</taxon>
        <taxon>Archaeoglobus</taxon>
    </lineage>
</organism>
<name>Y084_ARCFU</name>
<proteinExistence type="predicted"/>
<reference key="1">
    <citation type="journal article" date="1997" name="Nature">
        <title>The complete genome sequence of the hyperthermophilic, sulphate-reducing archaeon Archaeoglobus fulgidus.</title>
        <authorList>
            <person name="Klenk H.-P."/>
            <person name="Clayton R.A."/>
            <person name="Tomb J.-F."/>
            <person name="White O."/>
            <person name="Nelson K.E."/>
            <person name="Ketchum K.A."/>
            <person name="Dodson R.J."/>
            <person name="Gwinn M.L."/>
            <person name="Hickey E.K."/>
            <person name="Peterson J.D."/>
            <person name="Richardson D.L."/>
            <person name="Kerlavage A.R."/>
            <person name="Graham D.E."/>
            <person name="Kyrpides N.C."/>
            <person name="Fleischmann R.D."/>
            <person name="Quackenbush J."/>
            <person name="Lee N.H."/>
            <person name="Sutton G.G."/>
            <person name="Gill S.R."/>
            <person name="Kirkness E.F."/>
            <person name="Dougherty B.A."/>
            <person name="McKenney K."/>
            <person name="Adams M.D."/>
            <person name="Loftus B.J."/>
            <person name="Peterson S.N."/>
            <person name="Reich C.I."/>
            <person name="McNeil L.K."/>
            <person name="Badger J.H."/>
            <person name="Glodek A."/>
            <person name="Zhou L."/>
            <person name="Overbeek R."/>
            <person name="Gocayne J.D."/>
            <person name="Weidman J.F."/>
            <person name="McDonald L.A."/>
            <person name="Utterback T.R."/>
            <person name="Cotton M.D."/>
            <person name="Spriggs T."/>
            <person name="Artiach P."/>
            <person name="Kaine B.P."/>
            <person name="Sykes S.M."/>
            <person name="Sadow P.W."/>
            <person name="D'Andrea K.P."/>
            <person name="Bowman C."/>
            <person name="Fujii C."/>
            <person name="Garland S.A."/>
            <person name="Mason T.M."/>
            <person name="Olsen G.J."/>
            <person name="Fraser C.M."/>
            <person name="Smith H.O."/>
            <person name="Woese C.R."/>
            <person name="Venter J.C."/>
        </authorList>
    </citation>
    <scope>NUCLEOTIDE SEQUENCE [LARGE SCALE GENOMIC DNA]</scope>
    <source>
        <strain>ATCC 49558 / DSM 4304 / JCM 9628 / NBRC 100126 / VC-16</strain>
    </source>
</reference>
<feature type="chain" id="PRO_0000127825" description="Uncharacterized protein AF_0084">
    <location>
        <begin position="1"/>
        <end position="151"/>
    </location>
</feature>
<dbReference type="EMBL" id="AE000782">
    <property type="protein sequence ID" value="AAB91147.1"/>
    <property type="molecule type" value="Genomic_DNA"/>
</dbReference>
<dbReference type="PIR" id="D69260">
    <property type="entry name" value="D69260"/>
</dbReference>
<dbReference type="SMR" id="O30152"/>
<dbReference type="STRING" id="224325.AF_0084"/>
<dbReference type="PaxDb" id="224325-AF_0084"/>
<dbReference type="EnsemblBacteria" id="AAB91147">
    <property type="protein sequence ID" value="AAB91147"/>
    <property type="gene ID" value="AF_0084"/>
</dbReference>
<dbReference type="KEGG" id="afu:AF_0084"/>
<dbReference type="eggNOG" id="arCOG01009">
    <property type="taxonomic scope" value="Archaea"/>
</dbReference>
<dbReference type="HOGENOM" id="CLU_145172_0_0_2"/>
<dbReference type="OrthoDB" id="380838at2157"/>
<dbReference type="Proteomes" id="UP000002199">
    <property type="component" value="Chromosome"/>
</dbReference>